<comment type="function">
    <text evidence="1">RNA polymerase that catalyzes the synthesis of short RNA molecules used as primers for DNA polymerase during DNA replication. Also part of the exosome, which is a complex involved in RNA degradation. Acts as a poly(A)-binding protein that enhances the interaction between heteromeric, adenine-rich transcripts and the exosome.</text>
</comment>
<comment type="catalytic activity">
    <reaction evidence="1">
        <text>ssDNA + n NTP = ssDNA/pppN(pN)n-1 hybrid + (n-1) diphosphate.</text>
        <dbReference type="EC" id="2.7.7.101"/>
    </reaction>
</comment>
<comment type="cofactor">
    <cofactor evidence="1">
        <name>Mg(2+)</name>
        <dbReference type="ChEBI" id="CHEBI:18420"/>
    </cofactor>
    <text evidence="1">Binds two Mg(2+) per subunit.</text>
</comment>
<comment type="subunit">
    <text evidence="1">Forms a ternary complex with MCM helicase and DNA. Component of the archaeal exosome complex.</text>
</comment>
<comment type="similarity">
    <text evidence="1">Belongs to the archaeal DnaG primase family.</text>
</comment>
<dbReference type="EC" id="2.7.7.101" evidence="1"/>
<dbReference type="EMBL" id="AE017261">
    <property type="protein sequence ID" value="AAT43202.1"/>
    <property type="molecule type" value="Genomic_DNA"/>
</dbReference>
<dbReference type="RefSeq" id="WP_011177418.1">
    <property type="nucleotide sequence ID" value="NC_005877.1"/>
</dbReference>
<dbReference type="SMR" id="Q6L1F0"/>
<dbReference type="FunCoup" id="Q6L1F0">
    <property type="interactions" value="1"/>
</dbReference>
<dbReference type="STRING" id="263820.PTO0617"/>
<dbReference type="PaxDb" id="263820-PTO0617"/>
<dbReference type="GeneID" id="2844475"/>
<dbReference type="KEGG" id="pto:PTO0617"/>
<dbReference type="PATRIC" id="fig|263820.9.peg.649"/>
<dbReference type="eggNOG" id="arCOG04281">
    <property type="taxonomic scope" value="Archaea"/>
</dbReference>
<dbReference type="HOGENOM" id="CLU_034626_0_0_2"/>
<dbReference type="InParanoid" id="Q6L1F0"/>
<dbReference type="OrthoDB" id="8643at2157"/>
<dbReference type="Proteomes" id="UP000000438">
    <property type="component" value="Chromosome"/>
</dbReference>
<dbReference type="GO" id="GO:0005737">
    <property type="term" value="C:cytoplasm"/>
    <property type="evidence" value="ECO:0007669"/>
    <property type="project" value="TreeGrafter"/>
</dbReference>
<dbReference type="GO" id="GO:0000428">
    <property type="term" value="C:DNA-directed RNA polymerase complex"/>
    <property type="evidence" value="ECO:0007669"/>
    <property type="project" value="UniProtKB-KW"/>
</dbReference>
<dbReference type="GO" id="GO:0000178">
    <property type="term" value="C:exosome (RNase complex)"/>
    <property type="evidence" value="ECO:0007669"/>
    <property type="project" value="UniProtKB-KW"/>
</dbReference>
<dbReference type="GO" id="GO:1990077">
    <property type="term" value="C:primosome complex"/>
    <property type="evidence" value="ECO:0007669"/>
    <property type="project" value="UniProtKB-KW"/>
</dbReference>
<dbReference type="GO" id="GO:0003899">
    <property type="term" value="F:DNA-directed RNA polymerase activity"/>
    <property type="evidence" value="ECO:0007669"/>
    <property type="project" value="InterPro"/>
</dbReference>
<dbReference type="GO" id="GO:0046872">
    <property type="term" value="F:metal ion binding"/>
    <property type="evidence" value="ECO:0007669"/>
    <property type="project" value="UniProtKB-KW"/>
</dbReference>
<dbReference type="GO" id="GO:0008143">
    <property type="term" value="F:poly(A) binding"/>
    <property type="evidence" value="ECO:0007669"/>
    <property type="project" value="InterPro"/>
</dbReference>
<dbReference type="GO" id="GO:0006269">
    <property type="term" value="P:DNA replication, synthesis of primer"/>
    <property type="evidence" value="ECO:0007669"/>
    <property type="project" value="UniProtKB-UniRule"/>
</dbReference>
<dbReference type="CDD" id="cd01029">
    <property type="entry name" value="TOPRIM_primases"/>
    <property type="match status" value="1"/>
</dbReference>
<dbReference type="Gene3D" id="3.40.1360.10">
    <property type="match status" value="1"/>
</dbReference>
<dbReference type="HAMAP" id="MF_00007">
    <property type="entry name" value="DNA_primase_DnaG_arc"/>
    <property type="match status" value="1"/>
</dbReference>
<dbReference type="InterPro" id="IPR050219">
    <property type="entry name" value="DnaG_primase"/>
</dbReference>
<dbReference type="InterPro" id="IPR020607">
    <property type="entry name" value="Primase_DnaG_arc"/>
</dbReference>
<dbReference type="InterPro" id="IPR034154">
    <property type="entry name" value="TOPRIM_DnaG/twinkle"/>
</dbReference>
<dbReference type="InterPro" id="IPR006171">
    <property type="entry name" value="TOPRIM_dom"/>
</dbReference>
<dbReference type="NCBIfam" id="NF003108">
    <property type="entry name" value="PRK04031.1-1"/>
    <property type="match status" value="1"/>
</dbReference>
<dbReference type="PANTHER" id="PTHR30313">
    <property type="entry name" value="DNA PRIMASE"/>
    <property type="match status" value="1"/>
</dbReference>
<dbReference type="PANTHER" id="PTHR30313:SF2">
    <property type="entry name" value="DNA PRIMASE"/>
    <property type="match status" value="1"/>
</dbReference>
<dbReference type="Pfam" id="PF13662">
    <property type="entry name" value="Toprim_4"/>
    <property type="match status" value="1"/>
</dbReference>
<dbReference type="SMART" id="SM00493">
    <property type="entry name" value="TOPRIM"/>
    <property type="match status" value="1"/>
</dbReference>
<dbReference type="SUPFAM" id="SSF56731">
    <property type="entry name" value="DNA primase core"/>
    <property type="match status" value="1"/>
</dbReference>
<dbReference type="PROSITE" id="PS50880">
    <property type="entry name" value="TOPRIM"/>
    <property type="match status" value="1"/>
</dbReference>
<reference key="1">
    <citation type="journal article" date="2004" name="Proc. Natl. Acad. Sci. U.S.A.">
        <title>Genome sequence of Picrophilus torridus and its implications for life around pH 0.</title>
        <authorList>
            <person name="Fuetterer O."/>
            <person name="Angelov A."/>
            <person name="Liesegang H."/>
            <person name="Gottschalk G."/>
            <person name="Schleper C."/>
            <person name="Schepers B."/>
            <person name="Dock C."/>
            <person name="Antranikian G."/>
            <person name="Liebl W."/>
        </authorList>
    </citation>
    <scope>NUCLEOTIDE SEQUENCE [LARGE SCALE GENOMIC DNA]</scope>
    <source>
        <strain>ATCC 700027 / DSM 9790 / JCM 10055 / NBRC 100828 / KAW 2/3</strain>
    </source>
</reference>
<gene>
    <name evidence="1" type="primary">dnaG</name>
    <name type="ordered locus">PTO0617</name>
</gene>
<organism>
    <name type="scientific">Picrophilus torridus (strain ATCC 700027 / DSM 9790 / JCM 10055 / NBRC 100828 / KAW 2/3)</name>
    <dbReference type="NCBI Taxonomy" id="1122961"/>
    <lineage>
        <taxon>Archaea</taxon>
        <taxon>Methanobacteriati</taxon>
        <taxon>Thermoplasmatota</taxon>
        <taxon>Thermoplasmata</taxon>
        <taxon>Thermoplasmatales</taxon>
        <taxon>Picrophilaceae</taxon>
        <taxon>Picrophilus</taxon>
    </lineage>
</organism>
<name>DNAG_PICTO</name>
<feature type="chain" id="PRO_0000240465" description="DNA primase DnaG">
    <location>
        <begin position="1"/>
        <end position="429"/>
    </location>
</feature>
<feature type="domain" description="Toprim" evidence="1">
    <location>
        <begin position="172"/>
        <end position="246"/>
    </location>
</feature>
<feature type="region of interest" description="Disordered" evidence="2">
    <location>
        <begin position="287"/>
        <end position="322"/>
    </location>
</feature>
<feature type="binding site" evidence="1">
    <location>
        <position position="178"/>
    </location>
    <ligand>
        <name>Mg(2+)</name>
        <dbReference type="ChEBI" id="CHEBI:18420"/>
        <label>1</label>
        <note>catalytic</note>
    </ligand>
</feature>
<feature type="binding site" evidence="1">
    <location>
        <position position="220"/>
    </location>
    <ligand>
        <name>Mg(2+)</name>
        <dbReference type="ChEBI" id="CHEBI:18420"/>
        <label>1</label>
        <note>catalytic</note>
    </ligand>
</feature>
<feature type="binding site" evidence="1">
    <location>
        <position position="220"/>
    </location>
    <ligand>
        <name>Mg(2+)</name>
        <dbReference type="ChEBI" id="CHEBI:18420"/>
        <label>2</label>
    </ligand>
</feature>
<feature type="binding site" evidence="1">
    <location>
        <position position="222"/>
    </location>
    <ligand>
        <name>Mg(2+)</name>
        <dbReference type="ChEBI" id="CHEBI:18420"/>
        <label>2</label>
    </ligand>
</feature>
<proteinExistence type="inferred from homology"/>
<evidence type="ECO:0000255" key="1">
    <source>
        <dbReference type="HAMAP-Rule" id="MF_00007"/>
    </source>
</evidence>
<evidence type="ECO:0000256" key="2">
    <source>
        <dbReference type="SAM" id="MobiDB-lite"/>
    </source>
</evidence>
<accession>Q6L1F0</accession>
<protein>
    <recommendedName>
        <fullName evidence="1">DNA primase DnaG</fullName>
        <ecNumber evidence="1">2.7.7.101</ecNumber>
    </recommendedName>
</protein>
<sequence>MNVDPNITKYMIKAKIVTDGVVEKPDVVGAIFGQTEGLLGDELDLRDLQKSGKIGRIEVEIDTKKGRTEGYVLIPSGLDQVESSILAAALETIDRIGPCKAKVEIESIEDVRINKRDRVIKRAEELYRKMGENGKSLSESIVQTVREEVEKKEIISYGEEHLPAGPAIADSDSIIVVEGRNDVLNLLRYGIKNTIAVQGTSVPKTVKELSKSRTVTLFVDGDHGGDLIIKEMLQVADVDFIARAPPGTEVEELTYKQIIKALKYKTPVEQYLETHGMIEELKEWSSRNTKELEERQGNELKNERPEKINENEESEKNVELKEGSVQKLETVPEFDPSSPESIKFKLKQLYESRELELFDGQSSVGKFPVSDAIEKIESMHGDLLITGGIISQRLLDIAYNIGVKAIYGFKIGNITKKPDDIKVVAWDHI</sequence>
<keyword id="KW-0235">DNA replication</keyword>
<keyword id="KW-0240">DNA-directed RNA polymerase</keyword>
<keyword id="KW-0271">Exosome</keyword>
<keyword id="KW-0460">Magnesium</keyword>
<keyword id="KW-0479">Metal-binding</keyword>
<keyword id="KW-0548">Nucleotidyltransferase</keyword>
<keyword id="KW-0639">Primosome</keyword>
<keyword id="KW-0804">Transcription</keyword>
<keyword id="KW-0808">Transferase</keyword>